<name>DAPD_SHESW</name>
<keyword id="KW-0012">Acyltransferase</keyword>
<keyword id="KW-0028">Amino-acid biosynthesis</keyword>
<keyword id="KW-0963">Cytoplasm</keyword>
<keyword id="KW-0220">Diaminopimelate biosynthesis</keyword>
<keyword id="KW-0457">Lysine biosynthesis</keyword>
<keyword id="KW-0677">Repeat</keyword>
<keyword id="KW-0808">Transferase</keyword>
<accession>A1RLN0</accession>
<sequence length="274" mass="29714">MEALRQRIEAAFEARADITPSTVDANVRSDVQHVINMLDKGEVRVAEKIDGQWHVHQWLKKAVLLSFRIFDNAVIDGAETKYFDKVPLKFAEYDEARFKAEAIRVVPSATVRKGSFIGKNTVLMPSYVNLGAYVDEGTMVDTWATVGSCAQIGKNVHLSGGVGIGGVLEPLQAGPTIIEDNCFIGARSEIVEGVVVEEGSVISMGVYIGQSTRIYDRETGEVHYGRVPAGSVVVSGNLPSACGKYSLYAAIIVKKVDAKTRGKVGINELLRIVD</sequence>
<dbReference type="EC" id="2.3.1.117" evidence="1"/>
<dbReference type="EMBL" id="CP000503">
    <property type="protein sequence ID" value="ABM25575.1"/>
    <property type="molecule type" value="Genomic_DNA"/>
</dbReference>
<dbReference type="RefSeq" id="WP_011790031.1">
    <property type="nucleotide sequence ID" value="NC_008750.1"/>
</dbReference>
<dbReference type="SMR" id="A1RLN0"/>
<dbReference type="GeneID" id="67442865"/>
<dbReference type="KEGG" id="shw:Sputw3181_2758"/>
<dbReference type="HOGENOM" id="CLU_050859_0_1_6"/>
<dbReference type="UniPathway" id="UPA00034">
    <property type="reaction ID" value="UER00019"/>
</dbReference>
<dbReference type="Proteomes" id="UP000002597">
    <property type="component" value="Chromosome"/>
</dbReference>
<dbReference type="GO" id="GO:0005737">
    <property type="term" value="C:cytoplasm"/>
    <property type="evidence" value="ECO:0007669"/>
    <property type="project" value="UniProtKB-SubCell"/>
</dbReference>
<dbReference type="GO" id="GO:0008666">
    <property type="term" value="F:2,3,4,5-tetrahydropyridine-2,6-dicarboxylate N-succinyltransferase activity"/>
    <property type="evidence" value="ECO:0007669"/>
    <property type="project" value="UniProtKB-UniRule"/>
</dbReference>
<dbReference type="GO" id="GO:0016779">
    <property type="term" value="F:nucleotidyltransferase activity"/>
    <property type="evidence" value="ECO:0007669"/>
    <property type="project" value="TreeGrafter"/>
</dbReference>
<dbReference type="GO" id="GO:0019877">
    <property type="term" value="P:diaminopimelate biosynthetic process"/>
    <property type="evidence" value="ECO:0007669"/>
    <property type="project" value="UniProtKB-UniRule"/>
</dbReference>
<dbReference type="GO" id="GO:0009089">
    <property type="term" value="P:lysine biosynthetic process via diaminopimelate"/>
    <property type="evidence" value="ECO:0007669"/>
    <property type="project" value="UniProtKB-UniRule"/>
</dbReference>
<dbReference type="CDD" id="cd03350">
    <property type="entry name" value="LbH_THP_succinylT"/>
    <property type="match status" value="1"/>
</dbReference>
<dbReference type="Gene3D" id="2.160.10.10">
    <property type="entry name" value="Hexapeptide repeat proteins"/>
    <property type="match status" value="1"/>
</dbReference>
<dbReference type="Gene3D" id="1.10.166.10">
    <property type="entry name" value="Tetrahydrodipicolinate-N-succinyltransferase, N-terminal domain"/>
    <property type="match status" value="1"/>
</dbReference>
<dbReference type="HAMAP" id="MF_00811">
    <property type="entry name" value="DapD"/>
    <property type="match status" value="1"/>
</dbReference>
<dbReference type="InterPro" id="IPR005664">
    <property type="entry name" value="DapD_Trfase_Hexpep_rpt_fam"/>
</dbReference>
<dbReference type="InterPro" id="IPR001451">
    <property type="entry name" value="Hexapep"/>
</dbReference>
<dbReference type="InterPro" id="IPR018357">
    <property type="entry name" value="Hexapep_transf_CS"/>
</dbReference>
<dbReference type="InterPro" id="IPR023180">
    <property type="entry name" value="THP_succinylTrfase_dom1"/>
</dbReference>
<dbReference type="InterPro" id="IPR037133">
    <property type="entry name" value="THP_succinylTrfase_N_sf"/>
</dbReference>
<dbReference type="InterPro" id="IPR011004">
    <property type="entry name" value="Trimer_LpxA-like_sf"/>
</dbReference>
<dbReference type="NCBIfam" id="TIGR00965">
    <property type="entry name" value="dapD"/>
    <property type="match status" value="1"/>
</dbReference>
<dbReference type="NCBIfam" id="NF008808">
    <property type="entry name" value="PRK11830.1"/>
    <property type="match status" value="1"/>
</dbReference>
<dbReference type="PANTHER" id="PTHR19136:SF52">
    <property type="entry name" value="2,3,4,5-TETRAHYDROPYRIDINE-2,6-DICARBOXYLATE N-SUCCINYLTRANSFERASE"/>
    <property type="match status" value="1"/>
</dbReference>
<dbReference type="PANTHER" id="PTHR19136">
    <property type="entry name" value="MOLYBDENUM COFACTOR GUANYLYLTRANSFERASE"/>
    <property type="match status" value="1"/>
</dbReference>
<dbReference type="Pfam" id="PF14602">
    <property type="entry name" value="Hexapep_2"/>
    <property type="match status" value="1"/>
</dbReference>
<dbReference type="Pfam" id="PF14805">
    <property type="entry name" value="THDPS_N_2"/>
    <property type="match status" value="1"/>
</dbReference>
<dbReference type="SUPFAM" id="SSF51161">
    <property type="entry name" value="Trimeric LpxA-like enzymes"/>
    <property type="match status" value="1"/>
</dbReference>
<dbReference type="PROSITE" id="PS00101">
    <property type="entry name" value="HEXAPEP_TRANSFERASES"/>
    <property type="match status" value="1"/>
</dbReference>
<proteinExistence type="inferred from homology"/>
<reference key="1">
    <citation type="submission" date="2006-12" db="EMBL/GenBank/DDBJ databases">
        <title>Complete sequence of Shewanella sp. W3-18-1.</title>
        <authorList>
            <consortium name="US DOE Joint Genome Institute"/>
            <person name="Copeland A."/>
            <person name="Lucas S."/>
            <person name="Lapidus A."/>
            <person name="Barry K."/>
            <person name="Detter J.C."/>
            <person name="Glavina del Rio T."/>
            <person name="Hammon N."/>
            <person name="Israni S."/>
            <person name="Dalin E."/>
            <person name="Tice H."/>
            <person name="Pitluck S."/>
            <person name="Chain P."/>
            <person name="Malfatti S."/>
            <person name="Shin M."/>
            <person name="Vergez L."/>
            <person name="Schmutz J."/>
            <person name="Larimer F."/>
            <person name="Land M."/>
            <person name="Hauser L."/>
            <person name="Kyrpides N."/>
            <person name="Lykidis A."/>
            <person name="Tiedje J."/>
            <person name="Richardson P."/>
        </authorList>
    </citation>
    <scope>NUCLEOTIDE SEQUENCE [LARGE SCALE GENOMIC DNA]</scope>
    <source>
        <strain>W3-18-1</strain>
    </source>
</reference>
<gene>
    <name evidence="1" type="primary">dapD</name>
    <name type="ordered locus">Sputw3181_2758</name>
</gene>
<comment type="catalytic activity">
    <reaction evidence="1">
        <text>(S)-2,3,4,5-tetrahydrodipicolinate + succinyl-CoA + H2O = (S)-2-succinylamino-6-oxoheptanedioate + CoA</text>
        <dbReference type="Rhea" id="RHEA:17325"/>
        <dbReference type="ChEBI" id="CHEBI:15377"/>
        <dbReference type="ChEBI" id="CHEBI:15685"/>
        <dbReference type="ChEBI" id="CHEBI:16845"/>
        <dbReference type="ChEBI" id="CHEBI:57287"/>
        <dbReference type="ChEBI" id="CHEBI:57292"/>
        <dbReference type="EC" id="2.3.1.117"/>
    </reaction>
</comment>
<comment type="pathway">
    <text evidence="1">Amino-acid biosynthesis; L-lysine biosynthesis via DAP pathway; LL-2,6-diaminopimelate from (S)-tetrahydrodipicolinate (succinylase route): step 1/3.</text>
</comment>
<comment type="subunit">
    <text evidence="1">Homotrimer.</text>
</comment>
<comment type="subcellular location">
    <subcellularLocation>
        <location evidence="1">Cytoplasm</location>
    </subcellularLocation>
</comment>
<comment type="similarity">
    <text evidence="1">Belongs to the transferase hexapeptide repeat family.</text>
</comment>
<evidence type="ECO:0000255" key="1">
    <source>
        <dbReference type="HAMAP-Rule" id="MF_00811"/>
    </source>
</evidence>
<feature type="chain" id="PRO_1000047190" description="2,3,4,5-tetrahydropyridine-2,6-dicarboxylate N-succinyltransferase">
    <location>
        <begin position="1"/>
        <end position="274"/>
    </location>
</feature>
<feature type="binding site" evidence="1">
    <location>
        <position position="104"/>
    </location>
    <ligand>
        <name>substrate</name>
    </ligand>
</feature>
<feature type="binding site" evidence="1">
    <location>
        <position position="141"/>
    </location>
    <ligand>
        <name>substrate</name>
    </ligand>
</feature>
<organism>
    <name type="scientific">Shewanella sp. (strain W3-18-1)</name>
    <dbReference type="NCBI Taxonomy" id="351745"/>
    <lineage>
        <taxon>Bacteria</taxon>
        <taxon>Pseudomonadati</taxon>
        <taxon>Pseudomonadota</taxon>
        <taxon>Gammaproteobacteria</taxon>
        <taxon>Alteromonadales</taxon>
        <taxon>Shewanellaceae</taxon>
        <taxon>Shewanella</taxon>
    </lineage>
</organism>
<protein>
    <recommendedName>
        <fullName evidence="1">2,3,4,5-tetrahydropyridine-2,6-dicarboxylate N-succinyltransferase</fullName>
        <ecNumber evidence="1">2.3.1.117</ecNumber>
    </recommendedName>
    <alternativeName>
        <fullName evidence="1">Tetrahydrodipicolinate N-succinyltransferase</fullName>
        <shortName evidence="1">THDP succinyltransferase</shortName>
        <shortName evidence="1">THP succinyltransferase</shortName>
        <shortName evidence="1">Tetrahydropicolinate succinylase</shortName>
    </alternativeName>
</protein>